<keyword id="KW-0997">Cell inner membrane</keyword>
<keyword id="KW-1003">Cell membrane</keyword>
<keyword id="KW-0406">Ion transport</keyword>
<keyword id="KW-0472">Membrane</keyword>
<keyword id="KW-1185">Reference proteome</keyword>
<keyword id="KW-0812">Transmembrane</keyword>
<keyword id="KW-1133">Transmembrane helix</keyword>
<keyword id="KW-0813">Transport</keyword>
<keyword id="KW-0862">Zinc</keyword>
<proteinExistence type="inferred from homology"/>
<dbReference type="EMBL" id="CU928161">
    <property type="protein sequence ID" value="CAR02804.1"/>
    <property type="molecule type" value="Genomic_DNA"/>
</dbReference>
<dbReference type="RefSeq" id="WP_000387388.1">
    <property type="nucleotide sequence ID" value="NC_011742.1"/>
</dbReference>
<dbReference type="SMR" id="B7MM18"/>
<dbReference type="GeneID" id="93775479"/>
<dbReference type="KEGG" id="ecz:ECS88_1485"/>
<dbReference type="HOGENOM" id="CLU_007127_2_0_6"/>
<dbReference type="Proteomes" id="UP000000747">
    <property type="component" value="Chromosome"/>
</dbReference>
<dbReference type="GO" id="GO:0005886">
    <property type="term" value="C:plasma membrane"/>
    <property type="evidence" value="ECO:0007669"/>
    <property type="project" value="UniProtKB-SubCell"/>
</dbReference>
<dbReference type="GO" id="GO:0050897">
    <property type="term" value="F:cobalt ion binding"/>
    <property type="evidence" value="ECO:0007669"/>
    <property type="project" value="TreeGrafter"/>
</dbReference>
<dbReference type="GO" id="GO:0015087">
    <property type="term" value="F:cobalt ion transmembrane transporter activity"/>
    <property type="evidence" value="ECO:0007669"/>
    <property type="project" value="TreeGrafter"/>
</dbReference>
<dbReference type="GO" id="GO:0000287">
    <property type="term" value="F:magnesium ion binding"/>
    <property type="evidence" value="ECO:0007669"/>
    <property type="project" value="TreeGrafter"/>
</dbReference>
<dbReference type="GO" id="GO:0015095">
    <property type="term" value="F:magnesium ion transmembrane transporter activity"/>
    <property type="evidence" value="ECO:0007669"/>
    <property type="project" value="TreeGrafter"/>
</dbReference>
<dbReference type="GO" id="GO:0005385">
    <property type="term" value="F:zinc ion transmembrane transporter activity"/>
    <property type="evidence" value="ECO:0007669"/>
    <property type="project" value="UniProtKB-UniRule"/>
</dbReference>
<dbReference type="CDD" id="cd12833">
    <property type="entry name" value="ZntB-like_1"/>
    <property type="match status" value="1"/>
</dbReference>
<dbReference type="FunFam" id="1.20.58.340:FF:000002">
    <property type="entry name" value="Zinc transport protein ZntB"/>
    <property type="match status" value="1"/>
</dbReference>
<dbReference type="FunFam" id="1.20.58.340:FF:000003">
    <property type="entry name" value="Zinc transport protein ZntB"/>
    <property type="match status" value="1"/>
</dbReference>
<dbReference type="FunFam" id="3.30.460.20:FF:000001">
    <property type="entry name" value="Zinc transport protein ZntB"/>
    <property type="match status" value="1"/>
</dbReference>
<dbReference type="Gene3D" id="3.30.460.20">
    <property type="entry name" value="CorA soluble domain-like"/>
    <property type="match status" value="1"/>
</dbReference>
<dbReference type="Gene3D" id="1.20.58.340">
    <property type="entry name" value="Magnesium transport protein CorA, transmembrane region"/>
    <property type="match status" value="2"/>
</dbReference>
<dbReference type="HAMAP" id="MF_01565">
    <property type="entry name" value="ZntB"/>
    <property type="match status" value="1"/>
</dbReference>
<dbReference type="InterPro" id="IPR045861">
    <property type="entry name" value="CorA_cytoplasmic_dom"/>
</dbReference>
<dbReference type="InterPro" id="IPR045863">
    <property type="entry name" value="CorA_TM1_TM2"/>
</dbReference>
<dbReference type="InterPro" id="IPR002523">
    <property type="entry name" value="MgTranspt_CorA/ZnTranspt_ZntB"/>
</dbReference>
<dbReference type="InterPro" id="IPR023714">
    <property type="entry name" value="Zn_transp_ZntB"/>
</dbReference>
<dbReference type="NCBIfam" id="NF007092">
    <property type="entry name" value="PRK09546.1"/>
    <property type="match status" value="1"/>
</dbReference>
<dbReference type="PANTHER" id="PTHR46494">
    <property type="entry name" value="CORA FAMILY METAL ION TRANSPORTER (EUROFUNG)"/>
    <property type="match status" value="1"/>
</dbReference>
<dbReference type="PANTHER" id="PTHR46494:SF3">
    <property type="entry name" value="ZINC TRANSPORT PROTEIN ZNTB"/>
    <property type="match status" value="1"/>
</dbReference>
<dbReference type="Pfam" id="PF01544">
    <property type="entry name" value="CorA"/>
    <property type="match status" value="1"/>
</dbReference>
<dbReference type="SUPFAM" id="SSF143865">
    <property type="entry name" value="CorA soluble domain-like"/>
    <property type="match status" value="1"/>
</dbReference>
<dbReference type="SUPFAM" id="SSF144083">
    <property type="entry name" value="Magnesium transport protein CorA, transmembrane region"/>
    <property type="match status" value="1"/>
</dbReference>
<protein>
    <recommendedName>
        <fullName evidence="1">Zinc transport protein ZntB</fullName>
    </recommendedName>
</protein>
<sequence length="327" mass="36612">MEAIKGSDVNVPDAVFAWMLDGRGGVKPLENTDVIDEAHPCWLHLNYVHHDSAQWLATTPLLPNNVRDALAGESTRPRVSRLGEGTLITLRCINGSTDERPDQLVAMRVYMDGRLIVSTRQRKVLALDDVVSDLEEGTGPTDCGGWLVDVCDALTDHSSEFIEQLHDKIIDLEDNLLDQQIPPRGFLALLRKQLIVMRRYMAPQRDVYARLASERLPWMSDDQRRRMQDIADRLGRGLDEIDACIARTGVMADEIAQVMQENLARRTYTMSLMAMVFLPSTFLTGLFGVNLGGIPGGGWQFGFSIFCILLVVLIGGVALWLHRSKWL</sequence>
<comment type="function">
    <text evidence="1">Zinc transporter. Acts as a Zn(2+):proton symporter, which likely mediates zinc ion uptake.</text>
</comment>
<comment type="catalytic activity">
    <reaction evidence="1">
        <text>Zn(2+)(out) + H(+)(out) = Zn(2+)(in) + H(+)(in)</text>
        <dbReference type="Rhea" id="RHEA:71195"/>
        <dbReference type="ChEBI" id="CHEBI:15378"/>
        <dbReference type="ChEBI" id="CHEBI:29105"/>
    </reaction>
    <physiologicalReaction direction="left-to-right" evidence="1">
        <dbReference type="Rhea" id="RHEA:71196"/>
    </physiologicalReaction>
</comment>
<comment type="subcellular location">
    <subcellularLocation>
        <location evidence="1">Cell inner membrane</location>
        <topology evidence="1">Multi-pass membrane protein</topology>
    </subcellularLocation>
</comment>
<comment type="similarity">
    <text evidence="1">Belongs to the CorA metal ion transporter (MIT) (TC 1.A.35) family.</text>
</comment>
<evidence type="ECO:0000255" key="1">
    <source>
        <dbReference type="HAMAP-Rule" id="MF_01565"/>
    </source>
</evidence>
<accession>B7MM18</accession>
<feature type="chain" id="PRO_1000189719" description="Zinc transport protein ZntB">
    <location>
        <begin position="1"/>
        <end position="327"/>
    </location>
</feature>
<feature type="topological domain" description="Cytoplasmic" evidence="1">
    <location>
        <begin position="1"/>
        <end position="273"/>
    </location>
</feature>
<feature type="transmembrane region" description="Helical" evidence="1">
    <location>
        <begin position="274"/>
        <end position="294"/>
    </location>
</feature>
<feature type="topological domain" description="Periplasmic" evidence="1">
    <location>
        <begin position="295"/>
        <end position="300"/>
    </location>
</feature>
<feature type="transmembrane region" description="Helical" evidence="1">
    <location>
        <begin position="301"/>
        <end position="321"/>
    </location>
</feature>
<feature type="topological domain" description="Cytoplasmic" evidence="1">
    <location>
        <begin position="322"/>
        <end position="327"/>
    </location>
</feature>
<reference key="1">
    <citation type="journal article" date="2009" name="PLoS Genet.">
        <title>Organised genome dynamics in the Escherichia coli species results in highly diverse adaptive paths.</title>
        <authorList>
            <person name="Touchon M."/>
            <person name="Hoede C."/>
            <person name="Tenaillon O."/>
            <person name="Barbe V."/>
            <person name="Baeriswyl S."/>
            <person name="Bidet P."/>
            <person name="Bingen E."/>
            <person name="Bonacorsi S."/>
            <person name="Bouchier C."/>
            <person name="Bouvet O."/>
            <person name="Calteau A."/>
            <person name="Chiapello H."/>
            <person name="Clermont O."/>
            <person name="Cruveiller S."/>
            <person name="Danchin A."/>
            <person name="Diard M."/>
            <person name="Dossat C."/>
            <person name="Karoui M.E."/>
            <person name="Frapy E."/>
            <person name="Garry L."/>
            <person name="Ghigo J.M."/>
            <person name="Gilles A.M."/>
            <person name="Johnson J."/>
            <person name="Le Bouguenec C."/>
            <person name="Lescat M."/>
            <person name="Mangenot S."/>
            <person name="Martinez-Jehanne V."/>
            <person name="Matic I."/>
            <person name="Nassif X."/>
            <person name="Oztas S."/>
            <person name="Petit M.A."/>
            <person name="Pichon C."/>
            <person name="Rouy Z."/>
            <person name="Ruf C.S."/>
            <person name="Schneider D."/>
            <person name="Tourret J."/>
            <person name="Vacherie B."/>
            <person name="Vallenet D."/>
            <person name="Medigue C."/>
            <person name="Rocha E.P.C."/>
            <person name="Denamur E."/>
        </authorList>
    </citation>
    <scope>NUCLEOTIDE SEQUENCE [LARGE SCALE GENOMIC DNA]</scope>
    <source>
        <strain>S88 / ExPEC</strain>
    </source>
</reference>
<gene>
    <name evidence="1" type="primary">zntB</name>
    <name type="ordered locus">ECS88_1485</name>
</gene>
<organism>
    <name type="scientific">Escherichia coli O45:K1 (strain S88 / ExPEC)</name>
    <dbReference type="NCBI Taxonomy" id="585035"/>
    <lineage>
        <taxon>Bacteria</taxon>
        <taxon>Pseudomonadati</taxon>
        <taxon>Pseudomonadota</taxon>
        <taxon>Gammaproteobacteria</taxon>
        <taxon>Enterobacterales</taxon>
        <taxon>Enterobacteriaceae</taxon>
        <taxon>Escherichia</taxon>
    </lineage>
</organism>
<name>ZNTB_ECO45</name>